<gene>
    <name evidence="1" type="primary">uvrC</name>
    <name type="ordered locus">SE_0839</name>
</gene>
<dbReference type="EMBL" id="AE015929">
    <property type="protein sequence ID" value="AAO04436.1"/>
    <property type="status" value="ALT_INIT"/>
    <property type="molecule type" value="Genomic_DNA"/>
</dbReference>
<dbReference type="RefSeq" id="NP_764394.1">
    <property type="nucleotide sequence ID" value="NC_004461.1"/>
</dbReference>
<dbReference type="RefSeq" id="WP_001830175.1">
    <property type="nucleotide sequence ID" value="NZ_WBME01000035.1"/>
</dbReference>
<dbReference type="SMR" id="Q8CPL4"/>
<dbReference type="GeneID" id="50019023"/>
<dbReference type="KEGG" id="sep:SE_0839"/>
<dbReference type="PATRIC" id="fig|176280.10.peg.812"/>
<dbReference type="eggNOG" id="COG0322">
    <property type="taxonomic scope" value="Bacteria"/>
</dbReference>
<dbReference type="HOGENOM" id="CLU_014841_3_2_9"/>
<dbReference type="OrthoDB" id="9804933at2"/>
<dbReference type="Proteomes" id="UP000001411">
    <property type="component" value="Chromosome"/>
</dbReference>
<dbReference type="GO" id="GO:0005737">
    <property type="term" value="C:cytoplasm"/>
    <property type="evidence" value="ECO:0007669"/>
    <property type="project" value="UniProtKB-SubCell"/>
</dbReference>
<dbReference type="GO" id="GO:0009380">
    <property type="term" value="C:excinuclease repair complex"/>
    <property type="evidence" value="ECO:0007669"/>
    <property type="project" value="InterPro"/>
</dbReference>
<dbReference type="GO" id="GO:0003677">
    <property type="term" value="F:DNA binding"/>
    <property type="evidence" value="ECO:0007669"/>
    <property type="project" value="UniProtKB-UniRule"/>
</dbReference>
<dbReference type="GO" id="GO:0009381">
    <property type="term" value="F:excinuclease ABC activity"/>
    <property type="evidence" value="ECO:0007669"/>
    <property type="project" value="UniProtKB-UniRule"/>
</dbReference>
<dbReference type="GO" id="GO:0006289">
    <property type="term" value="P:nucleotide-excision repair"/>
    <property type="evidence" value="ECO:0007669"/>
    <property type="project" value="UniProtKB-UniRule"/>
</dbReference>
<dbReference type="GO" id="GO:0009432">
    <property type="term" value="P:SOS response"/>
    <property type="evidence" value="ECO:0007669"/>
    <property type="project" value="UniProtKB-UniRule"/>
</dbReference>
<dbReference type="CDD" id="cd10434">
    <property type="entry name" value="GIY-YIG_UvrC_Cho"/>
    <property type="match status" value="1"/>
</dbReference>
<dbReference type="FunFam" id="3.30.420.340:FF:000002">
    <property type="entry name" value="UvrABC system protein C"/>
    <property type="match status" value="1"/>
</dbReference>
<dbReference type="FunFam" id="3.40.1440.10:FF:000001">
    <property type="entry name" value="UvrABC system protein C"/>
    <property type="match status" value="1"/>
</dbReference>
<dbReference type="FunFam" id="4.10.860.10:FF:000007">
    <property type="entry name" value="UvrABC system protein C"/>
    <property type="match status" value="1"/>
</dbReference>
<dbReference type="Gene3D" id="1.10.150.20">
    <property type="entry name" value="5' to 3' exonuclease, C-terminal subdomain"/>
    <property type="match status" value="1"/>
</dbReference>
<dbReference type="Gene3D" id="3.40.1440.10">
    <property type="entry name" value="GIY-YIG endonuclease"/>
    <property type="match status" value="1"/>
</dbReference>
<dbReference type="Gene3D" id="4.10.860.10">
    <property type="entry name" value="UVR domain"/>
    <property type="match status" value="1"/>
</dbReference>
<dbReference type="Gene3D" id="3.30.420.340">
    <property type="entry name" value="UvrC, RNAse H endonuclease domain"/>
    <property type="match status" value="1"/>
</dbReference>
<dbReference type="HAMAP" id="MF_00203">
    <property type="entry name" value="UvrC"/>
    <property type="match status" value="1"/>
</dbReference>
<dbReference type="InterPro" id="IPR000305">
    <property type="entry name" value="GIY-YIG_endonuc"/>
</dbReference>
<dbReference type="InterPro" id="IPR035901">
    <property type="entry name" value="GIY-YIG_endonuc_sf"/>
</dbReference>
<dbReference type="InterPro" id="IPR047296">
    <property type="entry name" value="GIY-YIG_UvrC_Cho"/>
</dbReference>
<dbReference type="InterPro" id="IPR010994">
    <property type="entry name" value="RuvA_2-like"/>
</dbReference>
<dbReference type="InterPro" id="IPR001943">
    <property type="entry name" value="UVR_dom"/>
</dbReference>
<dbReference type="InterPro" id="IPR036876">
    <property type="entry name" value="UVR_dom_sf"/>
</dbReference>
<dbReference type="InterPro" id="IPR050066">
    <property type="entry name" value="UvrABC_protein_C"/>
</dbReference>
<dbReference type="InterPro" id="IPR004791">
    <property type="entry name" value="UvrC"/>
</dbReference>
<dbReference type="InterPro" id="IPR001162">
    <property type="entry name" value="UvrC_RNase_H_dom"/>
</dbReference>
<dbReference type="InterPro" id="IPR038476">
    <property type="entry name" value="UvrC_RNase_H_dom_sf"/>
</dbReference>
<dbReference type="NCBIfam" id="TIGR00194">
    <property type="entry name" value="uvrC"/>
    <property type="match status" value="1"/>
</dbReference>
<dbReference type="PANTHER" id="PTHR30562:SF1">
    <property type="entry name" value="UVRABC SYSTEM PROTEIN C"/>
    <property type="match status" value="1"/>
</dbReference>
<dbReference type="PANTHER" id="PTHR30562">
    <property type="entry name" value="UVRC/OXIDOREDUCTASE"/>
    <property type="match status" value="1"/>
</dbReference>
<dbReference type="Pfam" id="PF01541">
    <property type="entry name" value="GIY-YIG"/>
    <property type="match status" value="1"/>
</dbReference>
<dbReference type="Pfam" id="PF14520">
    <property type="entry name" value="HHH_5"/>
    <property type="match status" value="1"/>
</dbReference>
<dbReference type="Pfam" id="PF02151">
    <property type="entry name" value="UVR"/>
    <property type="match status" value="1"/>
</dbReference>
<dbReference type="Pfam" id="PF22920">
    <property type="entry name" value="UvrC_RNaseH"/>
    <property type="match status" value="1"/>
</dbReference>
<dbReference type="Pfam" id="PF08459">
    <property type="entry name" value="UvrC_RNaseH_dom"/>
    <property type="match status" value="1"/>
</dbReference>
<dbReference type="SMART" id="SM00465">
    <property type="entry name" value="GIYc"/>
    <property type="match status" value="1"/>
</dbReference>
<dbReference type="SUPFAM" id="SSF46600">
    <property type="entry name" value="C-terminal UvrC-binding domain of UvrB"/>
    <property type="match status" value="1"/>
</dbReference>
<dbReference type="SUPFAM" id="SSF82771">
    <property type="entry name" value="GIY-YIG endonuclease"/>
    <property type="match status" value="1"/>
</dbReference>
<dbReference type="SUPFAM" id="SSF47781">
    <property type="entry name" value="RuvA domain 2-like"/>
    <property type="match status" value="1"/>
</dbReference>
<dbReference type="PROSITE" id="PS50164">
    <property type="entry name" value="GIY_YIG"/>
    <property type="match status" value="1"/>
</dbReference>
<dbReference type="PROSITE" id="PS50151">
    <property type="entry name" value="UVR"/>
    <property type="match status" value="1"/>
</dbReference>
<dbReference type="PROSITE" id="PS50165">
    <property type="entry name" value="UVRC"/>
    <property type="match status" value="1"/>
</dbReference>
<reference key="1">
    <citation type="journal article" date="2003" name="Mol. Microbiol.">
        <title>Genome-based analysis of virulence genes in a non-biofilm-forming Staphylococcus epidermidis strain (ATCC 12228).</title>
        <authorList>
            <person name="Zhang Y.-Q."/>
            <person name="Ren S.-X."/>
            <person name="Li H.-L."/>
            <person name="Wang Y.-X."/>
            <person name="Fu G."/>
            <person name="Yang J."/>
            <person name="Qin Z.-Q."/>
            <person name="Miao Y.-G."/>
            <person name="Wang W.-Y."/>
            <person name="Chen R.-S."/>
            <person name="Shen Y."/>
            <person name="Chen Z."/>
            <person name="Yuan Z.-H."/>
            <person name="Zhao G.-P."/>
            <person name="Qu D."/>
            <person name="Danchin A."/>
            <person name="Wen Y.-M."/>
        </authorList>
    </citation>
    <scope>NUCLEOTIDE SEQUENCE [LARGE SCALE GENOMIC DNA]</scope>
    <source>
        <strain>ATCC 12228 / FDA PCI 1200</strain>
    </source>
</reference>
<accession>Q8CPL4</accession>
<proteinExistence type="inferred from homology"/>
<sequence length="594" mass="68837">MEEYQKKIKEKLNVVPLEPGCYLMKDRNDQVIYVGKAKRLRNRLRSYFTGAHDAKTTRLVGEIRNFEFIVTSSETESLLLELNLIKQYQPRYNILLKDDKSYPFIKITKEKHPRLLVTRTVKKNSGKYFGPYPNAYSAQETKKLLDRIYPFRKCDNMPDKLCLYYHIGQCMGPCVYDVDLEKYAQMTKEITDFLNGEDKTILHHLEDRMNKASEQLDFEQAKEYRDMIQHIHNLTKKQKIMSSDNTIRDVFGYSVSKGWMCVQVFFVRQGNMIKRDATMIPLQQTEEEEFYTFIGQFYSLNQHLLPKEVHVPKNLDKDIIQSVVDTKIVQPVRGAKKDMINLANHNAEVQLDNKFELIARDESRTIKAIEELGERMGIQTPIRIEAFDNSNIQGVDPVSAMVTFVDGKPHKKDYRKYKIKTVEGPDDYKSMREVVRRRYTRVLNEGLPLPDLIIVDGGKGHMNGVMDVLENELGLDIPVAGLQKNDKHQTSELLYGASAEIVPLKKNSQAFYLLHRIQDEVHRFAITFHRQTRQKTGLKSVLDDIDGIGTKRKTSLLRTFGSIKKMKEASFDELRQAGLPEKVAKNLQNALQNK</sequence>
<organism>
    <name type="scientific">Staphylococcus epidermidis (strain ATCC 12228 / FDA PCI 1200)</name>
    <dbReference type="NCBI Taxonomy" id="176280"/>
    <lineage>
        <taxon>Bacteria</taxon>
        <taxon>Bacillati</taxon>
        <taxon>Bacillota</taxon>
        <taxon>Bacilli</taxon>
        <taxon>Bacillales</taxon>
        <taxon>Staphylococcaceae</taxon>
        <taxon>Staphylococcus</taxon>
    </lineage>
</organism>
<keyword id="KW-0963">Cytoplasm</keyword>
<keyword id="KW-0227">DNA damage</keyword>
<keyword id="KW-0228">DNA excision</keyword>
<keyword id="KW-0234">DNA repair</keyword>
<keyword id="KW-0267">Excision nuclease</keyword>
<keyword id="KW-0742">SOS response</keyword>
<comment type="function">
    <text evidence="1">The UvrABC repair system catalyzes the recognition and processing of DNA lesions. UvrC both incises the 5' and 3' sides of the lesion. The N-terminal half is responsible for the 3' incision and the C-terminal half is responsible for the 5' incision.</text>
</comment>
<comment type="subunit">
    <text evidence="1">Interacts with UvrB in an incision complex.</text>
</comment>
<comment type="subcellular location">
    <subcellularLocation>
        <location evidence="1">Cytoplasm</location>
    </subcellularLocation>
</comment>
<comment type="similarity">
    <text evidence="1">Belongs to the UvrC family.</text>
</comment>
<comment type="sequence caution" evidence="2">
    <conflict type="erroneous initiation">
        <sequence resource="EMBL-CDS" id="AAO04436"/>
    </conflict>
</comment>
<name>UVRC_STAES</name>
<feature type="chain" id="PRO_0000138343" description="UvrABC system protein C">
    <location>
        <begin position="1"/>
        <end position="594"/>
    </location>
</feature>
<feature type="domain" description="GIY-YIG" evidence="1">
    <location>
        <begin position="17"/>
        <end position="94"/>
    </location>
</feature>
<feature type="domain" description="UVR" evidence="1">
    <location>
        <begin position="199"/>
        <end position="234"/>
    </location>
</feature>
<evidence type="ECO:0000255" key="1">
    <source>
        <dbReference type="HAMAP-Rule" id="MF_00203"/>
    </source>
</evidence>
<evidence type="ECO:0000305" key="2"/>
<protein>
    <recommendedName>
        <fullName evidence="1">UvrABC system protein C</fullName>
        <shortName evidence="1">Protein UvrC</shortName>
    </recommendedName>
    <alternativeName>
        <fullName evidence="1">Excinuclease ABC subunit C</fullName>
    </alternativeName>
</protein>